<organism>
    <name type="scientific">Escherichia coli (strain 55989 / EAEC)</name>
    <dbReference type="NCBI Taxonomy" id="585055"/>
    <lineage>
        <taxon>Bacteria</taxon>
        <taxon>Pseudomonadati</taxon>
        <taxon>Pseudomonadota</taxon>
        <taxon>Gammaproteobacteria</taxon>
        <taxon>Enterobacterales</taxon>
        <taxon>Enterobacteriaceae</taxon>
        <taxon>Escherichia</taxon>
    </lineage>
</organism>
<protein>
    <recommendedName>
        <fullName evidence="1">Pyridoxine/pyridoxal/pyridoxamine kinase</fullName>
        <shortName evidence="1">PN/PL/PM kinase</shortName>
        <ecNumber evidence="1">2.7.1.35</ecNumber>
    </recommendedName>
    <alternativeName>
        <fullName evidence="1">B6-vitamer kinase</fullName>
    </alternativeName>
</protein>
<comment type="function">
    <text evidence="1">B6-vitamer kinase involved in the salvage pathway of pyridoxal 5'-phosphate (PLP). Catalyzes the phosphorylation of pyridoxine (PN), pyridoxal (PL), and pyridoxamine (PM), forming their respective 5'-phosphorylated esters, i.e. PNP, PLP and PMP.</text>
</comment>
<comment type="catalytic activity">
    <reaction evidence="1">
        <text>pyridoxal + ATP = pyridoxal 5'-phosphate + ADP + H(+)</text>
        <dbReference type="Rhea" id="RHEA:10224"/>
        <dbReference type="ChEBI" id="CHEBI:15378"/>
        <dbReference type="ChEBI" id="CHEBI:17310"/>
        <dbReference type="ChEBI" id="CHEBI:30616"/>
        <dbReference type="ChEBI" id="CHEBI:456216"/>
        <dbReference type="ChEBI" id="CHEBI:597326"/>
        <dbReference type="EC" id="2.7.1.35"/>
    </reaction>
</comment>
<comment type="catalytic activity">
    <reaction evidence="1">
        <text>pyridoxine + ATP = pyridoxine 5'-phosphate + ADP + H(+)</text>
        <dbReference type="Rhea" id="RHEA:25108"/>
        <dbReference type="ChEBI" id="CHEBI:15378"/>
        <dbReference type="ChEBI" id="CHEBI:16709"/>
        <dbReference type="ChEBI" id="CHEBI:30616"/>
        <dbReference type="ChEBI" id="CHEBI:58589"/>
        <dbReference type="ChEBI" id="CHEBI:456216"/>
        <dbReference type="EC" id="2.7.1.35"/>
    </reaction>
</comment>
<comment type="catalytic activity">
    <reaction evidence="1">
        <text>pyridoxamine + ATP = pyridoxamine 5'-phosphate + ADP + H(+)</text>
        <dbReference type="Rhea" id="RHEA:25104"/>
        <dbReference type="ChEBI" id="CHEBI:15378"/>
        <dbReference type="ChEBI" id="CHEBI:30616"/>
        <dbReference type="ChEBI" id="CHEBI:57761"/>
        <dbReference type="ChEBI" id="CHEBI:58451"/>
        <dbReference type="ChEBI" id="CHEBI:456216"/>
        <dbReference type="EC" id="2.7.1.35"/>
    </reaction>
</comment>
<comment type="cofactor">
    <cofactor evidence="1">
        <name>Mg(2+)</name>
        <dbReference type="ChEBI" id="CHEBI:18420"/>
    </cofactor>
</comment>
<comment type="pathway">
    <text evidence="1">Cofactor metabolism; pyridoxal 5'-phosphate salvage; pyridoxal 5'-phosphate from pyridoxal: step 1/1.</text>
</comment>
<comment type="pathway">
    <text evidence="1">Cofactor metabolism; pyridoxal 5'-phosphate salvage; pyridoxine 5'-phosphate from pyridoxine: step 1/1.</text>
</comment>
<comment type="pathway">
    <text evidence="1">Cofactor metabolism; pyridoxal 5'-phosphate salvage; pyridoxamine 5'-phosphate from pyridoxamine: step 1/1.</text>
</comment>
<comment type="subunit">
    <text evidence="1">Homodimer.</text>
</comment>
<comment type="similarity">
    <text evidence="1">Belongs to the pyridoxine kinase family. PdxK subfamily.</text>
</comment>
<feature type="chain" id="PRO_1000186800" description="Pyridoxine/pyridoxal/pyridoxamine kinase">
    <location>
        <begin position="1"/>
        <end position="283"/>
    </location>
</feature>
<feature type="binding site" evidence="1">
    <location>
        <position position="23"/>
    </location>
    <ligand>
        <name>substrate</name>
    </ligand>
</feature>
<feature type="binding site" evidence="1">
    <location>
        <position position="59"/>
    </location>
    <ligand>
        <name>substrate</name>
    </ligand>
</feature>
<feature type="binding site" evidence="1">
    <location>
        <position position="125"/>
    </location>
    <ligand>
        <name>ATP</name>
        <dbReference type="ChEBI" id="CHEBI:30616"/>
    </ligand>
</feature>
<feature type="binding site" evidence="1">
    <location>
        <position position="136"/>
    </location>
    <ligand>
        <name>Mg(2+)</name>
        <dbReference type="ChEBI" id="CHEBI:18420"/>
    </ligand>
</feature>
<feature type="binding site" evidence="1">
    <location>
        <position position="157"/>
    </location>
    <ligand>
        <name>ATP</name>
        <dbReference type="ChEBI" id="CHEBI:30616"/>
    </ligand>
</feature>
<feature type="binding site" evidence="1">
    <location>
        <position position="162"/>
    </location>
    <ligand>
        <name>ATP</name>
        <dbReference type="ChEBI" id="CHEBI:30616"/>
    </ligand>
</feature>
<feature type="binding site" evidence="1">
    <location>
        <position position="162"/>
    </location>
    <ligand>
        <name>Mg(2+)</name>
        <dbReference type="ChEBI" id="CHEBI:18420"/>
    </ligand>
</feature>
<feature type="binding site" evidence="1">
    <location>
        <position position="195"/>
    </location>
    <ligand>
        <name>ATP</name>
        <dbReference type="ChEBI" id="CHEBI:30616"/>
    </ligand>
</feature>
<feature type="binding site" evidence="1">
    <location>
        <begin position="221"/>
        <end position="224"/>
    </location>
    <ligand>
        <name>ATP</name>
        <dbReference type="ChEBI" id="CHEBI:30616"/>
    </ligand>
</feature>
<feature type="binding site" evidence="1">
    <location>
        <position position="231"/>
    </location>
    <ligand>
        <name>ATP</name>
        <dbReference type="ChEBI" id="CHEBI:30616"/>
    </ligand>
</feature>
<feature type="binding site" evidence="1">
    <location>
        <position position="233"/>
    </location>
    <ligand>
        <name>substrate</name>
    </ligand>
</feature>
<gene>
    <name evidence="1" type="primary">pdxK</name>
    <name type="ordered locus">EC55989_2708</name>
</gene>
<keyword id="KW-0067">ATP-binding</keyword>
<keyword id="KW-0418">Kinase</keyword>
<keyword id="KW-0460">Magnesium</keyword>
<keyword id="KW-0479">Metal-binding</keyword>
<keyword id="KW-0547">Nucleotide-binding</keyword>
<keyword id="KW-1185">Reference proteome</keyword>
<keyword id="KW-0808">Transferase</keyword>
<keyword id="KW-0862">Zinc</keyword>
<proteinExistence type="inferred from homology"/>
<name>PDXK_ECO55</name>
<sequence>MSSLLLFNDKSRALQADIVAVQSQVVYGSVGNSIAVPAIKQNGLNVFAVPTVLLSNTPHYDTFYGGAIPDEWFSGYLRALHERDALRQLRAVTTGYMGTASQIKILAEWLTALRKDHPDLLIMVDPVIGDIDSGIYVKPDLPEAYRQYLLPLAQGITPNIFELEILTGKNCRDLDSAIAAAKSLLSDTLKWVVITSASGNEENQEMQVVVVSADSVNVISHSRVKTDLKGTGDLFCAQLISGLLKGKALNDAVHRSGLRVLEVMRYTQQHESDELILPPLAEA</sequence>
<accession>B7LCG3</accession>
<dbReference type="EC" id="2.7.1.35" evidence="1"/>
<dbReference type="EMBL" id="CU928145">
    <property type="protein sequence ID" value="CAU98574.1"/>
    <property type="molecule type" value="Genomic_DNA"/>
</dbReference>
<dbReference type="RefSeq" id="WP_000096625.1">
    <property type="nucleotide sequence ID" value="NC_011748.1"/>
</dbReference>
<dbReference type="SMR" id="B7LCG3"/>
<dbReference type="KEGG" id="eck:EC55989_2708"/>
<dbReference type="HOGENOM" id="CLU_046496_3_1_6"/>
<dbReference type="UniPathway" id="UPA01068">
    <property type="reaction ID" value="UER00298"/>
</dbReference>
<dbReference type="UniPathway" id="UPA01068">
    <property type="reaction ID" value="UER00299"/>
</dbReference>
<dbReference type="UniPathway" id="UPA01068">
    <property type="reaction ID" value="UER00300"/>
</dbReference>
<dbReference type="Proteomes" id="UP000000746">
    <property type="component" value="Chromosome"/>
</dbReference>
<dbReference type="GO" id="GO:0005829">
    <property type="term" value="C:cytosol"/>
    <property type="evidence" value="ECO:0007669"/>
    <property type="project" value="TreeGrafter"/>
</dbReference>
<dbReference type="GO" id="GO:0005524">
    <property type="term" value="F:ATP binding"/>
    <property type="evidence" value="ECO:0007669"/>
    <property type="project" value="UniProtKB-UniRule"/>
</dbReference>
<dbReference type="GO" id="GO:0008902">
    <property type="term" value="F:hydroxymethylpyrimidine kinase activity"/>
    <property type="evidence" value="ECO:0007669"/>
    <property type="project" value="TreeGrafter"/>
</dbReference>
<dbReference type="GO" id="GO:0000287">
    <property type="term" value="F:magnesium ion binding"/>
    <property type="evidence" value="ECO:0007669"/>
    <property type="project" value="UniProtKB-UniRule"/>
</dbReference>
<dbReference type="GO" id="GO:0008478">
    <property type="term" value="F:pyridoxal kinase activity"/>
    <property type="evidence" value="ECO:0007669"/>
    <property type="project" value="UniProtKB-UniRule"/>
</dbReference>
<dbReference type="GO" id="GO:0008270">
    <property type="term" value="F:zinc ion binding"/>
    <property type="evidence" value="ECO:0007669"/>
    <property type="project" value="UniProtKB-UniRule"/>
</dbReference>
<dbReference type="GO" id="GO:0009443">
    <property type="term" value="P:pyridoxal 5'-phosphate salvage"/>
    <property type="evidence" value="ECO:0007669"/>
    <property type="project" value="UniProtKB-UniRule"/>
</dbReference>
<dbReference type="CDD" id="cd01173">
    <property type="entry name" value="pyridoxal_pyridoxamine_kinase"/>
    <property type="match status" value="1"/>
</dbReference>
<dbReference type="FunFam" id="3.40.1190.20:FF:000009">
    <property type="entry name" value="Pyridoxine/pyridoxal/pyridoxamine kinase"/>
    <property type="match status" value="1"/>
</dbReference>
<dbReference type="Gene3D" id="3.40.1190.20">
    <property type="match status" value="1"/>
</dbReference>
<dbReference type="HAMAP" id="MF_01638">
    <property type="entry name" value="PdxK"/>
    <property type="match status" value="1"/>
</dbReference>
<dbReference type="InterPro" id="IPR023479">
    <property type="entry name" value="PdxK"/>
</dbReference>
<dbReference type="InterPro" id="IPR013749">
    <property type="entry name" value="PM/HMP-P_kinase-1"/>
</dbReference>
<dbReference type="InterPro" id="IPR004625">
    <property type="entry name" value="PyrdxlKinase"/>
</dbReference>
<dbReference type="InterPro" id="IPR029056">
    <property type="entry name" value="Ribokinase-like"/>
</dbReference>
<dbReference type="NCBIfam" id="NF006034">
    <property type="entry name" value="PRK08176.1"/>
    <property type="match status" value="1"/>
</dbReference>
<dbReference type="NCBIfam" id="TIGR00687">
    <property type="entry name" value="pyridox_kin"/>
    <property type="match status" value="1"/>
</dbReference>
<dbReference type="PANTHER" id="PTHR10534">
    <property type="entry name" value="PYRIDOXAL KINASE"/>
    <property type="match status" value="1"/>
</dbReference>
<dbReference type="PANTHER" id="PTHR10534:SF15">
    <property type="entry name" value="PYRIDOXINE_PYRIDOXAL_PYRIDOXAMINE KINASE"/>
    <property type="match status" value="1"/>
</dbReference>
<dbReference type="Pfam" id="PF08543">
    <property type="entry name" value="Phos_pyr_kin"/>
    <property type="match status" value="1"/>
</dbReference>
<dbReference type="SUPFAM" id="SSF53613">
    <property type="entry name" value="Ribokinase-like"/>
    <property type="match status" value="1"/>
</dbReference>
<reference key="1">
    <citation type="journal article" date="2009" name="PLoS Genet.">
        <title>Organised genome dynamics in the Escherichia coli species results in highly diverse adaptive paths.</title>
        <authorList>
            <person name="Touchon M."/>
            <person name="Hoede C."/>
            <person name="Tenaillon O."/>
            <person name="Barbe V."/>
            <person name="Baeriswyl S."/>
            <person name="Bidet P."/>
            <person name="Bingen E."/>
            <person name="Bonacorsi S."/>
            <person name="Bouchier C."/>
            <person name="Bouvet O."/>
            <person name="Calteau A."/>
            <person name="Chiapello H."/>
            <person name="Clermont O."/>
            <person name="Cruveiller S."/>
            <person name="Danchin A."/>
            <person name="Diard M."/>
            <person name="Dossat C."/>
            <person name="Karoui M.E."/>
            <person name="Frapy E."/>
            <person name="Garry L."/>
            <person name="Ghigo J.M."/>
            <person name="Gilles A.M."/>
            <person name="Johnson J."/>
            <person name="Le Bouguenec C."/>
            <person name="Lescat M."/>
            <person name="Mangenot S."/>
            <person name="Martinez-Jehanne V."/>
            <person name="Matic I."/>
            <person name="Nassif X."/>
            <person name="Oztas S."/>
            <person name="Petit M.A."/>
            <person name="Pichon C."/>
            <person name="Rouy Z."/>
            <person name="Ruf C.S."/>
            <person name="Schneider D."/>
            <person name="Tourret J."/>
            <person name="Vacherie B."/>
            <person name="Vallenet D."/>
            <person name="Medigue C."/>
            <person name="Rocha E.P.C."/>
            <person name="Denamur E."/>
        </authorList>
    </citation>
    <scope>NUCLEOTIDE SEQUENCE [LARGE SCALE GENOMIC DNA]</scope>
    <source>
        <strain>55989 / EAEC</strain>
    </source>
</reference>
<evidence type="ECO:0000255" key="1">
    <source>
        <dbReference type="HAMAP-Rule" id="MF_01638"/>
    </source>
</evidence>